<proteinExistence type="inferred from homology"/>
<reference key="1">
    <citation type="journal article" date="2007" name="PLoS Biol.">
        <title>Evolution of symbiotic bacteria in the distal human intestine.</title>
        <authorList>
            <person name="Xu J."/>
            <person name="Mahowald M.A."/>
            <person name="Ley R.E."/>
            <person name="Lozupone C.A."/>
            <person name="Hamady M."/>
            <person name="Martens E.C."/>
            <person name="Henrissat B."/>
            <person name="Coutinho P.M."/>
            <person name="Minx P."/>
            <person name="Latreille P."/>
            <person name="Cordum H."/>
            <person name="Van Brunt A."/>
            <person name="Kim K."/>
            <person name="Fulton R.S."/>
            <person name="Fulton L.A."/>
            <person name="Clifton S.W."/>
            <person name="Wilson R.K."/>
            <person name="Knight R.D."/>
            <person name="Gordon J.I."/>
        </authorList>
    </citation>
    <scope>NUCLEOTIDE SEQUENCE [LARGE SCALE GENOMIC DNA]</scope>
    <source>
        <strain>ATCC 8503 / DSM 20701 / CIP 104284 / JCM 5825 / NCTC 11152</strain>
    </source>
</reference>
<dbReference type="EC" id="7.4.2.8" evidence="1"/>
<dbReference type="EMBL" id="CP000140">
    <property type="protein sequence ID" value="ABR42261.1"/>
    <property type="molecule type" value="Genomic_DNA"/>
</dbReference>
<dbReference type="RefSeq" id="WP_005855607.1">
    <property type="nucleotide sequence ID" value="NZ_LR215978.1"/>
</dbReference>
<dbReference type="SMR" id="A6L997"/>
<dbReference type="STRING" id="435591.BDI_0484"/>
<dbReference type="PaxDb" id="435591-BDI_0484"/>
<dbReference type="GeneID" id="93525028"/>
<dbReference type="KEGG" id="pdi:BDI_0484"/>
<dbReference type="eggNOG" id="COG0653">
    <property type="taxonomic scope" value="Bacteria"/>
</dbReference>
<dbReference type="HOGENOM" id="CLU_005314_3_0_10"/>
<dbReference type="BioCyc" id="PDIS435591:G1G5A-499-MONOMER"/>
<dbReference type="Proteomes" id="UP000000566">
    <property type="component" value="Chromosome"/>
</dbReference>
<dbReference type="GO" id="GO:0031522">
    <property type="term" value="C:cell envelope Sec protein transport complex"/>
    <property type="evidence" value="ECO:0007669"/>
    <property type="project" value="TreeGrafter"/>
</dbReference>
<dbReference type="GO" id="GO:0005829">
    <property type="term" value="C:cytosol"/>
    <property type="evidence" value="ECO:0007669"/>
    <property type="project" value="TreeGrafter"/>
</dbReference>
<dbReference type="GO" id="GO:0005886">
    <property type="term" value="C:plasma membrane"/>
    <property type="evidence" value="ECO:0007669"/>
    <property type="project" value="UniProtKB-SubCell"/>
</dbReference>
<dbReference type="GO" id="GO:0005524">
    <property type="term" value="F:ATP binding"/>
    <property type="evidence" value="ECO:0007669"/>
    <property type="project" value="UniProtKB-UniRule"/>
</dbReference>
<dbReference type="GO" id="GO:0046872">
    <property type="term" value="F:metal ion binding"/>
    <property type="evidence" value="ECO:0007669"/>
    <property type="project" value="UniProtKB-KW"/>
</dbReference>
<dbReference type="GO" id="GO:0008564">
    <property type="term" value="F:protein-exporting ATPase activity"/>
    <property type="evidence" value="ECO:0007669"/>
    <property type="project" value="UniProtKB-EC"/>
</dbReference>
<dbReference type="GO" id="GO:0065002">
    <property type="term" value="P:intracellular protein transmembrane transport"/>
    <property type="evidence" value="ECO:0007669"/>
    <property type="project" value="UniProtKB-UniRule"/>
</dbReference>
<dbReference type="GO" id="GO:0017038">
    <property type="term" value="P:protein import"/>
    <property type="evidence" value="ECO:0007669"/>
    <property type="project" value="InterPro"/>
</dbReference>
<dbReference type="GO" id="GO:0006605">
    <property type="term" value="P:protein targeting"/>
    <property type="evidence" value="ECO:0007669"/>
    <property type="project" value="UniProtKB-UniRule"/>
</dbReference>
<dbReference type="GO" id="GO:0043952">
    <property type="term" value="P:protein transport by the Sec complex"/>
    <property type="evidence" value="ECO:0007669"/>
    <property type="project" value="TreeGrafter"/>
</dbReference>
<dbReference type="CDD" id="cd17928">
    <property type="entry name" value="DEXDc_SecA"/>
    <property type="match status" value="1"/>
</dbReference>
<dbReference type="CDD" id="cd18803">
    <property type="entry name" value="SF2_C_secA"/>
    <property type="match status" value="1"/>
</dbReference>
<dbReference type="FunFam" id="3.40.50.300:FF:000246">
    <property type="entry name" value="Preprotein translocase subunit SecA"/>
    <property type="match status" value="1"/>
</dbReference>
<dbReference type="FunFam" id="3.40.50.300:FF:000694">
    <property type="entry name" value="Preprotein translocase subunit SecA"/>
    <property type="match status" value="1"/>
</dbReference>
<dbReference type="Gene3D" id="1.10.3060.10">
    <property type="entry name" value="Helical scaffold and wing domains of SecA"/>
    <property type="match status" value="1"/>
</dbReference>
<dbReference type="Gene3D" id="3.40.50.300">
    <property type="entry name" value="P-loop containing nucleotide triphosphate hydrolases"/>
    <property type="match status" value="3"/>
</dbReference>
<dbReference type="Gene3D" id="3.90.1440.10">
    <property type="entry name" value="SecA, preprotein cross-linking domain"/>
    <property type="match status" value="1"/>
</dbReference>
<dbReference type="HAMAP" id="MF_01382">
    <property type="entry name" value="SecA"/>
    <property type="match status" value="1"/>
</dbReference>
<dbReference type="InterPro" id="IPR014001">
    <property type="entry name" value="Helicase_ATP-bd"/>
</dbReference>
<dbReference type="InterPro" id="IPR001650">
    <property type="entry name" value="Helicase_C-like"/>
</dbReference>
<dbReference type="InterPro" id="IPR027417">
    <property type="entry name" value="P-loop_NTPase"/>
</dbReference>
<dbReference type="InterPro" id="IPR004027">
    <property type="entry name" value="SEC_C_motif"/>
</dbReference>
<dbReference type="InterPro" id="IPR000185">
    <property type="entry name" value="SecA"/>
</dbReference>
<dbReference type="InterPro" id="IPR020937">
    <property type="entry name" value="SecA_CS"/>
</dbReference>
<dbReference type="InterPro" id="IPR011115">
    <property type="entry name" value="SecA_DEAD"/>
</dbReference>
<dbReference type="InterPro" id="IPR014018">
    <property type="entry name" value="SecA_motor_DEAD"/>
</dbReference>
<dbReference type="InterPro" id="IPR011130">
    <property type="entry name" value="SecA_preprotein_X-link_dom"/>
</dbReference>
<dbReference type="InterPro" id="IPR044722">
    <property type="entry name" value="SecA_SF2_C"/>
</dbReference>
<dbReference type="InterPro" id="IPR011116">
    <property type="entry name" value="SecA_Wing/Scaffold"/>
</dbReference>
<dbReference type="InterPro" id="IPR036266">
    <property type="entry name" value="SecA_Wing/Scaffold_sf"/>
</dbReference>
<dbReference type="InterPro" id="IPR036670">
    <property type="entry name" value="SecA_X-link_sf"/>
</dbReference>
<dbReference type="NCBIfam" id="NF009536">
    <property type="entry name" value="PRK12901.1"/>
    <property type="match status" value="1"/>
</dbReference>
<dbReference type="PANTHER" id="PTHR30612:SF0">
    <property type="entry name" value="CHLOROPLAST PROTEIN-TRANSPORTING ATPASE"/>
    <property type="match status" value="1"/>
</dbReference>
<dbReference type="PANTHER" id="PTHR30612">
    <property type="entry name" value="SECA INNER MEMBRANE COMPONENT OF SEC PROTEIN SECRETION SYSTEM"/>
    <property type="match status" value="1"/>
</dbReference>
<dbReference type="Pfam" id="PF21090">
    <property type="entry name" value="P-loop_SecA"/>
    <property type="match status" value="1"/>
</dbReference>
<dbReference type="Pfam" id="PF02810">
    <property type="entry name" value="SEC-C"/>
    <property type="match status" value="1"/>
</dbReference>
<dbReference type="Pfam" id="PF07517">
    <property type="entry name" value="SecA_DEAD"/>
    <property type="match status" value="1"/>
</dbReference>
<dbReference type="Pfam" id="PF01043">
    <property type="entry name" value="SecA_PP_bind"/>
    <property type="match status" value="1"/>
</dbReference>
<dbReference type="Pfam" id="PF07516">
    <property type="entry name" value="SecA_SW"/>
    <property type="match status" value="1"/>
</dbReference>
<dbReference type="PRINTS" id="PR00906">
    <property type="entry name" value="SECA"/>
</dbReference>
<dbReference type="SMART" id="SM00957">
    <property type="entry name" value="SecA_DEAD"/>
    <property type="match status" value="1"/>
</dbReference>
<dbReference type="SMART" id="SM00958">
    <property type="entry name" value="SecA_PP_bind"/>
    <property type="match status" value="1"/>
</dbReference>
<dbReference type="SUPFAM" id="SSF81886">
    <property type="entry name" value="Helical scaffold and wing domains of SecA"/>
    <property type="match status" value="1"/>
</dbReference>
<dbReference type="SUPFAM" id="SSF52540">
    <property type="entry name" value="P-loop containing nucleoside triphosphate hydrolases"/>
    <property type="match status" value="2"/>
</dbReference>
<dbReference type="SUPFAM" id="SSF81767">
    <property type="entry name" value="Pre-protein crosslinking domain of SecA"/>
    <property type="match status" value="1"/>
</dbReference>
<dbReference type="PROSITE" id="PS01312">
    <property type="entry name" value="SECA"/>
    <property type="match status" value="1"/>
</dbReference>
<dbReference type="PROSITE" id="PS51196">
    <property type="entry name" value="SECA_MOTOR_DEAD"/>
    <property type="match status" value="1"/>
</dbReference>
<sequence length="1126" mass="128964">MGFNEFMTKLFGNKSQRDLKEITPYVDKVKAVYPSIKALSNDELRAKTDEIKQRIQDYVAEEKAQVEELRKGIEDKELEEREAIWAEVDKIEKAITDKMEVVLEQSLPEVFAIMKDTARRFAENEEVVVTANQFDRDLAARFDFVRIEDDKAIYANHWKAGGNEITWDMIHYDVQLFGGVVLHKGKIAEMATGEGKTLVATLPVFLNALTRNGVHVVTVNDYLSKRDSEWMGPLYMFHGLSVDCIDKHQPNSEARRKAYEADITFGTNNEFGFDYLRDNMAISPKDLVQRKHNYSIVDEVDSVLIDDARTPLIISGPIPRGEEQLFEQFRPNVEVVVNAQKDLCSKLLIEAKKKMASDDQKVVEEGSILLYRSFKGYPRNKALIKFLSEQGVKAQMLKTEEYFMSENMRHMHEATDELYFVIDEKNNSIELTDKGIDLLTGKTDDPTFFVLPDITSQLSQLENMTGTEEEKQAQKDEILANYSVKSERVHTINQLLKAYTLFEKDDEYVVMDNKVMIVDEQTGRIMDGRRYSDGLHQAIEAKERVKVEAATQTFATITLQNYFRMYHKLSGMTGTAETEAGEFWDIYKLDVVVIPTNRPIARNDMNDRIYKTKREKYNAVIEEIVQLTEAGRPVLVGTTSVEISELLSRMLTMRKIQHNVLNAKLHQKEAEIVALAGQKSTVTIATNMAGRGTDIKLSKDVKDAGGLAIIGTERHESRRVDRQLRGRAGRQGDPGSSVFFVSLEDDLMRLFASEKIAGLMDKLGFKEGEVLEHNMLSKSVERAQKKVEENNFGIRKRLLEYDDVMNSQRNVIYTRRRHALMGERIGLDVLNTIYDTSTAIADQHAEDFEGFKLELFKTFAMESPFTEDEFKSMKPEQLVEKLFEEALKTYKRRMERMTQVAHPVIKQVYENQGAMYENIMIPITDGKRMYNVSCNLKEAYDTECKAIVKSFQKSIVLHMIDEGWKEHLREMDELRHSVQNASYENKDPLLIYKLESYNLFKTMVDNMNRKTAAILMRGQIPVREEPTEEQRQAMQARQAAVAQQAAQAIAEERARQRIAVQEAAPEKHEDMSRYRTEKTDLSGNNTQAEAPQPKQAPVRAEKRVGRNDPCPCGSGKKYKNCHGQGL</sequence>
<evidence type="ECO:0000255" key="1">
    <source>
        <dbReference type="HAMAP-Rule" id="MF_01382"/>
    </source>
</evidence>
<evidence type="ECO:0000256" key="2">
    <source>
        <dbReference type="SAM" id="MobiDB-lite"/>
    </source>
</evidence>
<gene>
    <name evidence="1" type="primary">secA</name>
    <name type="ordered locus">BDI_0484</name>
</gene>
<protein>
    <recommendedName>
        <fullName evidence="1">Protein translocase subunit SecA</fullName>
        <ecNumber evidence="1">7.4.2.8</ecNumber>
    </recommendedName>
</protein>
<comment type="function">
    <text evidence="1">Part of the Sec protein translocase complex. Interacts with the SecYEG preprotein conducting channel. Has a central role in coupling the hydrolysis of ATP to the transfer of proteins into and across the cell membrane, serving as an ATP-driven molecular motor driving the stepwise translocation of polypeptide chains across the membrane.</text>
</comment>
<comment type="catalytic activity">
    <reaction evidence="1">
        <text>ATP + H2O + cellular proteinSide 1 = ADP + phosphate + cellular proteinSide 2.</text>
        <dbReference type="EC" id="7.4.2.8"/>
    </reaction>
</comment>
<comment type="cofactor">
    <cofactor evidence="1">
        <name>Zn(2+)</name>
        <dbReference type="ChEBI" id="CHEBI:29105"/>
    </cofactor>
    <text evidence="1">May bind 1 zinc ion per subunit.</text>
</comment>
<comment type="subunit">
    <text evidence="1">Monomer and homodimer. Part of the essential Sec protein translocation apparatus which comprises SecA, SecYEG and auxiliary proteins SecDF. Other proteins may also be involved.</text>
</comment>
<comment type="subcellular location">
    <subcellularLocation>
        <location evidence="1">Cell inner membrane</location>
        <topology evidence="1">Peripheral membrane protein</topology>
        <orientation evidence="1">Cytoplasmic side</orientation>
    </subcellularLocation>
    <subcellularLocation>
        <location evidence="1">Cytoplasm</location>
    </subcellularLocation>
    <text evidence="1">Distribution is 50-50.</text>
</comment>
<comment type="similarity">
    <text evidence="1">Belongs to the SecA family.</text>
</comment>
<organism>
    <name type="scientific">Parabacteroides distasonis (strain ATCC 8503 / DSM 20701 / CIP 104284 / JCM 5825 / NCTC 11152)</name>
    <dbReference type="NCBI Taxonomy" id="435591"/>
    <lineage>
        <taxon>Bacteria</taxon>
        <taxon>Pseudomonadati</taxon>
        <taxon>Bacteroidota</taxon>
        <taxon>Bacteroidia</taxon>
        <taxon>Bacteroidales</taxon>
        <taxon>Tannerellaceae</taxon>
        <taxon>Parabacteroides</taxon>
    </lineage>
</organism>
<keyword id="KW-0067">ATP-binding</keyword>
<keyword id="KW-0997">Cell inner membrane</keyword>
<keyword id="KW-1003">Cell membrane</keyword>
<keyword id="KW-0963">Cytoplasm</keyword>
<keyword id="KW-0472">Membrane</keyword>
<keyword id="KW-0479">Metal-binding</keyword>
<keyword id="KW-0547">Nucleotide-binding</keyword>
<keyword id="KW-0653">Protein transport</keyword>
<keyword id="KW-1185">Reference proteome</keyword>
<keyword id="KW-1278">Translocase</keyword>
<keyword id="KW-0811">Translocation</keyword>
<keyword id="KW-0813">Transport</keyword>
<keyword id="KW-0862">Zinc</keyword>
<name>SECA_PARD8</name>
<feature type="chain" id="PRO_0000320880" description="Protein translocase subunit SecA">
    <location>
        <begin position="1"/>
        <end position="1126"/>
    </location>
</feature>
<feature type="region of interest" description="Disordered" evidence="2">
    <location>
        <begin position="1060"/>
        <end position="1126"/>
    </location>
</feature>
<feature type="compositionally biased region" description="Basic and acidic residues" evidence="2">
    <location>
        <begin position="1064"/>
        <end position="1080"/>
    </location>
</feature>
<feature type="binding site" evidence="1">
    <location>
        <position position="175"/>
    </location>
    <ligand>
        <name>ATP</name>
        <dbReference type="ChEBI" id="CHEBI:30616"/>
    </ligand>
</feature>
<feature type="binding site" evidence="1">
    <location>
        <begin position="193"/>
        <end position="197"/>
    </location>
    <ligand>
        <name>ATP</name>
        <dbReference type="ChEBI" id="CHEBI:30616"/>
    </ligand>
</feature>
<feature type="binding site" evidence="1">
    <location>
        <position position="694"/>
    </location>
    <ligand>
        <name>ATP</name>
        <dbReference type="ChEBI" id="CHEBI:30616"/>
    </ligand>
</feature>
<feature type="binding site" evidence="1">
    <location>
        <position position="1110"/>
    </location>
    <ligand>
        <name>Zn(2+)</name>
        <dbReference type="ChEBI" id="CHEBI:29105"/>
    </ligand>
</feature>
<feature type="binding site" evidence="1">
    <location>
        <position position="1112"/>
    </location>
    <ligand>
        <name>Zn(2+)</name>
        <dbReference type="ChEBI" id="CHEBI:29105"/>
    </ligand>
</feature>
<feature type="binding site" evidence="1">
    <location>
        <position position="1121"/>
    </location>
    <ligand>
        <name>Zn(2+)</name>
        <dbReference type="ChEBI" id="CHEBI:29105"/>
    </ligand>
</feature>
<feature type="binding site" evidence="1">
    <location>
        <position position="1122"/>
    </location>
    <ligand>
        <name>Zn(2+)</name>
        <dbReference type="ChEBI" id="CHEBI:29105"/>
    </ligand>
</feature>
<accession>A6L997</accession>